<reference evidence="5 6" key="1">
    <citation type="journal article" date="2008" name="Regul. Pept.">
        <title>Disulfide-containing peptides from the glandular skin secretions of froglets of the genus Crinia: structure, activity and evolutionary trends.</title>
        <authorList>
            <person name="Jackway R.J."/>
            <person name="Pukala T.L."/>
            <person name="Maselli V.M."/>
            <person name="Musgrave I.F."/>
            <person name="Bowie J.H."/>
            <person name="Liu Y."/>
            <person name="Surinya-Johnson K.H."/>
            <person name="Donnellan S.C."/>
            <person name="Doyle J.R."/>
            <person name="Llewellyn L.E."/>
            <person name="Tyler M.J."/>
        </authorList>
    </citation>
    <scope>NUCLEOTIDE SEQUENCE [MRNA]</scope>
    <scope>DISCUSSION OF SEQUENCE</scope>
    <source>
        <tissue evidence="6">Skin</tissue>
    </source>
</reference>
<reference evidence="5" key="2">
    <citation type="journal article" date="2006" name="Rapid Commun. Mass Spectrom.">
        <title>Host-defence skin peptides of the Australian streambank froglet Crinia riparia: isolation and sequence determination by positive and negative ion electrospray mass spectrometry.</title>
        <authorList>
            <person name="Maselli V.M."/>
            <person name="Bilusich D."/>
            <person name="Bowie J.H."/>
            <person name="Tyler M.J."/>
        </authorList>
    </citation>
    <scope>PROTEIN SEQUENCE OF 42-53</scope>
    <scope>SUBCELLULAR LOCATION</scope>
    <scope>TISSUE SPECIFICITY</scope>
    <scope>DISULFIDE BOND</scope>
    <source>
        <tissue evidence="2">Skin secretion</tissue>
    </source>
</reference>
<name>RIP15_CRIRI</name>
<comment type="subcellular location">
    <subcellularLocation>
        <location evidence="2">Secreted</location>
    </subcellularLocation>
</comment>
<comment type="tissue specificity">
    <text evidence="2">Expressed by the skin glands.</text>
</comment>
<protein>
    <recommendedName>
        <fullName evidence="3 4 6">Riparin-1.5 acid</fullName>
    </recommendedName>
</protein>
<sequence length="55" mass="6088">MKIIVFLAVLMLVSAQVCLVSAAEMEHSSDNELSSRDLVKRFFLPPCAHKGTCNH</sequence>
<dbReference type="EMBL" id="EF550518">
    <property type="protein sequence ID" value="ABQ88314.1"/>
    <property type="molecule type" value="mRNA"/>
</dbReference>
<dbReference type="SMR" id="A6MWS9"/>
<dbReference type="GO" id="GO:0005576">
    <property type="term" value="C:extracellular region"/>
    <property type="evidence" value="ECO:0000314"/>
    <property type="project" value="UniProtKB"/>
</dbReference>
<dbReference type="GO" id="GO:0006952">
    <property type="term" value="P:defense response"/>
    <property type="evidence" value="ECO:0007669"/>
    <property type="project" value="UniProtKB-KW"/>
</dbReference>
<keyword id="KW-0878">Amphibian defense peptide</keyword>
<keyword id="KW-0903">Direct protein sequencing</keyword>
<keyword id="KW-1015">Disulfide bond</keyword>
<keyword id="KW-0964">Secreted</keyword>
<keyword id="KW-0732">Signal</keyword>
<organism>
    <name type="scientific">Crinia riparia</name>
    <name type="common">Streambank froglet</name>
    <name type="synonym">Flinders Ranges froglet</name>
    <dbReference type="NCBI Taxonomy" id="446489"/>
    <lineage>
        <taxon>Eukaryota</taxon>
        <taxon>Metazoa</taxon>
        <taxon>Chordata</taxon>
        <taxon>Craniata</taxon>
        <taxon>Vertebrata</taxon>
        <taxon>Euteleostomi</taxon>
        <taxon>Amphibia</taxon>
        <taxon>Batrachia</taxon>
        <taxon>Anura</taxon>
        <taxon>Neobatrachia</taxon>
        <taxon>Myobatrachoidea</taxon>
        <taxon>Myobatrachidae</taxon>
        <taxon>Myobatrachinae</taxon>
        <taxon>Crinia</taxon>
    </lineage>
</organism>
<accession>A6MWS9</accession>
<evidence type="ECO:0000255" key="1"/>
<evidence type="ECO:0000269" key="2">
    <source>
    </source>
</evidence>
<evidence type="ECO:0000303" key="3">
    <source>
    </source>
</evidence>
<evidence type="ECO:0000303" key="4">
    <source>
    </source>
</evidence>
<evidence type="ECO:0000305" key="5"/>
<evidence type="ECO:0000312" key="6">
    <source>
        <dbReference type="EMBL" id="ABQ88314.1"/>
    </source>
</evidence>
<feature type="signal peptide" evidence="1 3">
    <location>
        <begin position="1"/>
        <end position="15"/>
    </location>
</feature>
<feature type="propeptide" id="PRO_0000371732" evidence="2">
    <location>
        <begin position="16"/>
        <end position="41"/>
    </location>
</feature>
<feature type="peptide" id="PRO_5000254171" description="Riparin-1.5 acid" evidence="2">
    <location>
        <begin position="42"/>
        <end position="53"/>
    </location>
</feature>
<feature type="propeptide" id="PRO_0000371733" evidence="2">
    <location>
        <begin position="54"/>
        <end position="55"/>
    </location>
</feature>
<feature type="disulfide bond" evidence="2">
    <location>
        <begin position="47"/>
        <end position="53"/>
    </location>
</feature>
<proteinExistence type="evidence at protein level"/>